<sequence length="279" mass="31511">MPSLQKTKNRIALIDNIKKITKAMELVATSKMKKTQKHFLEVNEFSQSVLDIFSKIVSQIDPQIKLYPDGQKNSTLYIVISSDIGLAGSYNSNIFKILNSNIKNEDKLILIGQKAINFFSNRQDQIIETFKALPDYVTYKIAKLISDSALNSFLNKDVNQIKVVYTKFINLINQQEKISTILPIKKNPMKSEIKENAILEFEPDVESVFHKAIPLYLASIIFGFLTESKVSELAARRTAMESASKNAIDLIGNLKIEYNQTRQAKITQEISEIVAGSVE</sequence>
<evidence type="ECO:0000255" key="1">
    <source>
        <dbReference type="HAMAP-Rule" id="MF_00815"/>
    </source>
</evidence>
<reference key="1">
    <citation type="journal article" date="2001" name="Nucleic Acids Res.">
        <title>The complete genome sequence of the murine respiratory pathogen Mycoplasma pulmonis.</title>
        <authorList>
            <person name="Chambaud I."/>
            <person name="Heilig R."/>
            <person name="Ferris S."/>
            <person name="Barbe V."/>
            <person name="Samson D."/>
            <person name="Galisson F."/>
            <person name="Moszer I."/>
            <person name="Dybvig K."/>
            <person name="Wroblewski H."/>
            <person name="Viari A."/>
            <person name="Rocha E.P.C."/>
            <person name="Blanchard A."/>
        </authorList>
    </citation>
    <scope>NUCLEOTIDE SEQUENCE [LARGE SCALE GENOMIC DNA]</scope>
    <source>
        <strain>UAB CTIP</strain>
    </source>
</reference>
<proteinExistence type="inferred from homology"/>
<dbReference type="EMBL" id="AL445563">
    <property type="protein sequence ID" value="CAC13440.1"/>
    <property type="molecule type" value="Genomic_DNA"/>
</dbReference>
<dbReference type="PIR" id="C90545">
    <property type="entry name" value="C90545"/>
</dbReference>
<dbReference type="RefSeq" id="WP_010925071.1">
    <property type="nucleotide sequence ID" value="NC_002771.1"/>
</dbReference>
<dbReference type="SMR" id="Q98QU4"/>
<dbReference type="STRING" id="272635.gene:17576857"/>
<dbReference type="KEGG" id="mpu:MYPU_2670"/>
<dbReference type="eggNOG" id="COG0224">
    <property type="taxonomic scope" value="Bacteria"/>
</dbReference>
<dbReference type="HOGENOM" id="CLU_050669_0_1_14"/>
<dbReference type="BioCyc" id="MPUL272635:G1GT6-268-MONOMER"/>
<dbReference type="Proteomes" id="UP000000528">
    <property type="component" value="Chromosome"/>
</dbReference>
<dbReference type="GO" id="GO:0005886">
    <property type="term" value="C:plasma membrane"/>
    <property type="evidence" value="ECO:0007669"/>
    <property type="project" value="UniProtKB-SubCell"/>
</dbReference>
<dbReference type="GO" id="GO:0045259">
    <property type="term" value="C:proton-transporting ATP synthase complex"/>
    <property type="evidence" value="ECO:0007669"/>
    <property type="project" value="UniProtKB-KW"/>
</dbReference>
<dbReference type="GO" id="GO:0005524">
    <property type="term" value="F:ATP binding"/>
    <property type="evidence" value="ECO:0007669"/>
    <property type="project" value="UniProtKB-UniRule"/>
</dbReference>
<dbReference type="GO" id="GO:0046933">
    <property type="term" value="F:proton-transporting ATP synthase activity, rotational mechanism"/>
    <property type="evidence" value="ECO:0007669"/>
    <property type="project" value="UniProtKB-UniRule"/>
</dbReference>
<dbReference type="GO" id="GO:0042777">
    <property type="term" value="P:proton motive force-driven plasma membrane ATP synthesis"/>
    <property type="evidence" value="ECO:0007669"/>
    <property type="project" value="UniProtKB-UniRule"/>
</dbReference>
<dbReference type="CDD" id="cd12151">
    <property type="entry name" value="F1-ATPase_gamma"/>
    <property type="match status" value="1"/>
</dbReference>
<dbReference type="Gene3D" id="3.40.1380.10">
    <property type="match status" value="1"/>
</dbReference>
<dbReference type="Gene3D" id="1.10.287.80">
    <property type="entry name" value="ATP synthase, gamma subunit, helix hairpin domain"/>
    <property type="match status" value="1"/>
</dbReference>
<dbReference type="HAMAP" id="MF_00815">
    <property type="entry name" value="ATP_synth_gamma_bact"/>
    <property type="match status" value="1"/>
</dbReference>
<dbReference type="InterPro" id="IPR035968">
    <property type="entry name" value="ATP_synth_F1_ATPase_gsu"/>
</dbReference>
<dbReference type="InterPro" id="IPR000131">
    <property type="entry name" value="ATP_synth_F1_gsu"/>
</dbReference>
<dbReference type="NCBIfam" id="TIGR01146">
    <property type="entry name" value="ATPsyn_F1gamma"/>
    <property type="match status" value="1"/>
</dbReference>
<dbReference type="PANTHER" id="PTHR11693">
    <property type="entry name" value="ATP SYNTHASE GAMMA CHAIN"/>
    <property type="match status" value="1"/>
</dbReference>
<dbReference type="PANTHER" id="PTHR11693:SF22">
    <property type="entry name" value="ATP SYNTHASE SUBUNIT GAMMA, MITOCHONDRIAL"/>
    <property type="match status" value="1"/>
</dbReference>
<dbReference type="Pfam" id="PF00231">
    <property type="entry name" value="ATP-synt"/>
    <property type="match status" value="1"/>
</dbReference>
<dbReference type="PRINTS" id="PR00126">
    <property type="entry name" value="ATPASEGAMMA"/>
</dbReference>
<dbReference type="SUPFAM" id="SSF52943">
    <property type="entry name" value="ATP synthase (F1-ATPase), gamma subunit"/>
    <property type="match status" value="1"/>
</dbReference>
<organism>
    <name type="scientific">Mycoplasmopsis pulmonis (strain UAB CTIP)</name>
    <name type="common">Mycoplasma pulmonis</name>
    <dbReference type="NCBI Taxonomy" id="272635"/>
    <lineage>
        <taxon>Bacteria</taxon>
        <taxon>Bacillati</taxon>
        <taxon>Mycoplasmatota</taxon>
        <taxon>Mycoplasmoidales</taxon>
        <taxon>Metamycoplasmataceae</taxon>
        <taxon>Mycoplasmopsis</taxon>
    </lineage>
</organism>
<gene>
    <name evidence="1" type="primary">atpG</name>
    <name type="ordered locus">MYPU_2670</name>
</gene>
<protein>
    <recommendedName>
        <fullName evidence="1">ATP synthase gamma chain</fullName>
    </recommendedName>
    <alternativeName>
        <fullName evidence="1">ATP synthase F1 sector gamma subunit</fullName>
    </alternativeName>
    <alternativeName>
        <fullName evidence="1">F-ATPase gamma subunit</fullName>
    </alternativeName>
</protein>
<feature type="chain" id="PRO_0000073325" description="ATP synthase gamma chain">
    <location>
        <begin position="1"/>
        <end position="279"/>
    </location>
</feature>
<name>ATPG_MYCPU</name>
<comment type="function">
    <text evidence="1">Produces ATP from ADP in the presence of a proton gradient across the membrane. The gamma chain is believed to be important in regulating ATPase activity and the flow of protons through the CF(0) complex.</text>
</comment>
<comment type="subunit">
    <text evidence="1">F-type ATPases have 2 components, CF(1) - the catalytic core - and CF(0) - the membrane proton channel. CF(1) has five subunits: alpha(3), beta(3), gamma(1), delta(1), epsilon(1). CF(0) has three main subunits: a, b and c.</text>
</comment>
<comment type="subcellular location">
    <subcellularLocation>
        <location evidence="1">Cell membrane</location>
        <topology evidence="1">Peripheral membrane protein</topology>
    </subcellularLocation>
</comment>
<comment type="similarity">
    <text evidence="1">Belongs to the ATPase gamma chain family.</text>
</comment>
<accession>Q98QU4</accession>
<keyword id="KW-0066">ATP synthesis</keyword>
<keyword id="KW-1003">Cell membrane</keyword>
<keyword id="KW-0139">CF(1)</keyword>
<keyword id="KW-0375">Hydrogen ion transport</keyword>
<keyword id="KW-0406">Ion transport</keyword>
<keyword id="KW-0472">Membrane</keyword>
<keyword id="KW-1185">Reference proteome</keyword>
<keyword id="KW-0813">Transport</keyword>